<dbReference type="EMBL" id="CP001219">
    <property type="protein sequence ID" value="ACK79712.1"/>
    <property type="molecule type" value="Genomic_DNA"/>
</dbReference>
<dbReference type="RefSeq" id="WP_009569556.1">
    <property type="nucleotide sequence ID" value="NC_011761.1"/>
</dbReference>
<dbReference type="SMR" id="B7J478"/>
<dbReference type="STRING" id="243159.AFE_0338"/>
<dbReference type="PaxDb" id="243159-AFE_0338"/>
<dbReference type="GeneID" id="65279717"/>
<dbReference type="KEGG" id="afr:AFE_0338"/>
<dbReference type="eggNOG" id="COG0198">
    <property type="taxonomic scope" value="Bacteria"/>
</dbReference>
<dbReference type="HOGENOM" id="CLU_093315_2_2_6"/>
<dbReference type="Proteomes" id="UP000001362">
    <property type="component" value="Chromosome"/>
</dbReference>
<dbReference type="GO" id="GO:1990904">
    <property type="term" value="C:ribonucleoprotein complex"/>
    <property type="evidence" value="ECO:0007669"/>
    <property type="project" value="UniProtKB-KW"/>
</dbReference>
<dbReference type="GO" id="GO:0005840">
    <property type="term" value="C:ribosome"/>
    <property type="evidence" value="ECO:0007669"/>
    <property type="project" value="UniProtKB-KW"/>
</dbReference>
<dbReference type="GO" id="GO:0019843">
    <property type="term" value="F:rRNA binding"/>
    <property type="evidence" value="ECO:0007669"/>
    <property type="project" value="UniProtKB-UniRule"/>
</dbReference>
<dbReference type="GO" id="GO:0003735">
    <property type="term" value="F:structural constituent of ribosome"/>
    <property type="evidence" value="ECO:0007669"/>
    <property type="project" value="InterPro"/>
</dbReference>
<dbReference type="GO" id="GO:0006412">
    <property type="term" value="P:translation"/>
    <property type="evidence" value="ECO:0007669"/>
    <property type="project" value="UniProtKB-UniRule"/>
</dbReference>
<dbReference type="CDD" id="cd06089">
    <property type="entry name" value="KOW_RPL26"/>
    <property type="match status" value="1"/>
</dbReference>
<dbReference type="FunFam" id="2.30.30.30:FF:000004">
    <property type="entry name" value="50S ribosomal protein L24"/>
    <property type="match status" value="1"/>
</dbReference>
<dbReference type="Gene3D" id="2.30.30.30">
    <property type="match status" value="1"/>
</dbReference>
<dbReference type="HAMAP" id="MF_01326_B">
    <property type="entry name" value="Ribosomal_uL24_B"/>
    <property type="match status" value="1"/>
</dbReference>
<dbReference type="InterPro" id="IPR005824">
    <property type="entry name" value="KOW"/>
</dbReference>
<dbReference type="InterPro" id="IPR014722">
    <property type="entry name" value="Rib_uL2_dom2"/>
</dbReference>
<dbReference type="InterPro" id="IPR003256">
    <property type="entry name" value="Ribosomal_uL24"/>
</dbReference>
<dbReference type="InterPro" id="IPR005825">
    <property type="entry name" value="Ribosomal_uL24_CS"/>
</dbReference>
<dbReference type="InterPro" id="IPR041988">
    <property type="entry name" value="Ribosomal_uL24_KOW"/>
</dbReference>
<dbReference type="InterPro" id="IPR008991">
    <property type="entry name" value="Translation_prot_SH3-like_sf"/>
</dbReference>
<dbReference type="NCBIfam" id="TIGR01079">
    <property type="entry name" value="rplX_bact"/>
    <property type="match status" value="1"/>
</dbReference>
<dbReference type="PANTHER" id="PTHR12903">
    <property type="entry name" value="MITOCHONDRIAL RIBOSOMAL PROTEIN L24"/>
    <property type="match status" value="1"/>
</dbReference>
<dbReference type="Pfam" id="PF00467">
    <property type="entry name" value="KOW"/>
    <property type="match status" value="1"/>
</dbReference>
<dbReference type="Pfam" id="PF17136">
    <property type="entry name" value="ribosomal_L24"/>
    <property type="match status" value="1"/>
</dbReference>
<dbReference type="SMART" id="SM00739">
    <property type="entry name" value="KOW"/>
    <property type="match status" value="1"/>
</dbReference>
<dbReference type="SUPFAM" id="SSF50104">
    <property type="entry name" value="Translation proteins SH3-like domain"/>
    <property type="match status" value="1"/>
</dbReference>
<dbReference type="PROSITE" id="PS01108">
    <property type="entry name" value="RIBOSOMAL_L24"/>
    <property type="match status" value="1"/>
</dbReference>
<protein>
    <recommendedName>
        <fullName evidence="1">Large ribosomal subunit protein uL24</fullName>
    </recommendedName>
    <alternativeName>
        <fullName evidence="2">50S ribosomal protein L24</fullName>
    </alternativeName>
</protein>
<comment type="function">
    <text evidence="1">One of two assembly initiator proteins, it binds directly to the 5'-end of the 23S rRNA, where it nucleates assembly of the 50S subunit.</text>
</comment>
<comment type="function">
    <text evidence="1">One of the proteins that surrounds the polypeptide exit tunnel on the outside of the subunit.</text>
</comment>
<comment type="subunit">
    <text evidence="1">Part of the 50S ribosomal subunit.</text>
</comment>
<comment type="similarity">
    <text evidence="1">Belongs to the universal ribosomal protein uL24 family.</text>
</comment>
<proteinExistence type="inferred from homology"/>
<sequence>MLKVRKDDEVVVLAGKDKGKRGKVLKVLREDSRVLVEKVNMIKRHVRPDRMGKAGGIVEKEAPIHVSNVAIFNAATGGGDRIGYKVLEDGQKVRVFKSNGEVIGRR</sequence>
<accession>B7J478</accession>
<name>RL24_ACIF2</name>
<reference key="1">
    <citation type="journal article" date="2008" name="BMC Genomics">
        <title>Acidithiobacillus ferrooxidans metabolism: from genome sequence to industrial applications.</title>
        <authorList>
            <person name="Valdes J."/>
            <person name="Pedroso I."/>
            <person name="Quatrini R."/>
            <person name="Dodson R.J."/>
            <person name="Tettelin H."/>
            <person name="Blake R. II"/>
            <person name="Eisen J.A."/>
            <person name="Holmes D.S."/>
        </authorList>
    </citation>
    <scope>NUCLEOTIDE SEQUENCE [LARGE SCALE GENOMIC DNA]</scope>
    <source>
        <strain>ATCC 23270 / DSM 14882 / CIP 104768 / NCIMB 8455</strain>
    </source>
</reference>
<gene>
    <name evidence="1" type="primary">rplX</name>
    <name type="ordered locus">AFE_0338</name>
</gene>
<keyword id="KW-1185">Reference proteome</keyword>
<keyword id="KW-0687">Ribonucleoprotein</keyword>
<keyword id="KW-0689">Ribosomal protein</keyword>
<keyword id="KW-0694">RNA-binding</keyword>
<keyword id="KW-0699">rRNA-binding</keyword>
<organism>
    <name type="scientific">Acidithiobacillus ferrooxidans (strain ATCC 23270 / DSM 14882 / CIP 104768 / NCIMB 8455)</name>
    <name type="common">Ferrobacillus ferrooxidans (strain ATCC 23270)</name>
    <dbReference type="NCBI Taxonomy" id="243159"/>
    <lineage>
        <taxon>Bacteria</taxon>
        <taxon>Pseudomonadati</taxon>
        <taxon>Pseudomonadota</taxon>
        <taxon>Acidithiobacillia</taxon>
        <taxon>Acidithiobacillales</taxon>
        <taxon>Acidithiobacillaceae</taxon>
        <taxon>Acidithiobacillus</taxon>
    </lineage>
</organism>
<feature type="chain" id="PRO_1000165916" description="Large ribosomal subunit protein uL24">
    <location>
        <begin position="1"/>
        <end position="106"/>
    </location>
</feature>
<evidence type="ECO:0000255" key="1">
    <source>
        <dbReference type="HAMAP-Rule" id="MF_01326"/>
    </source>
</evidence>
<evidence type="ECO:0000305" key="2"/>